<evidence type="ECO:0000255" key="1">
    <source>
        <dbReference type="HAMAP-Rule" id="MF_00668"/>
    </source>
</evidence>
<proteinExistence type="inferred from homology"/>
<protein>
    <recommendedName>
        <fullName evidence="1">6-carboxyhexanoate--CoA ligase</fullName>
        <ecNumber evidence="1">6.2.1.14</ecNumber>
    </recommendedName>
    <alternativeName>
        <fullName evidence="1">Pimeloyl-CoA synthase</fullName>
    </alternativeName>
</protein>
<comment type="function">
    <text evidence="1">Catalyzes the transformation of pimelate into pimeloyl-CoA with concomitant hydrolysis of ATP to AMP.</text>
</comment>
<comment type="catalytic activity">
    <reaction evidence="1">
        <text>heptanedioate + ATP + CoA = 6-carboxyhexanoyl-CoA + AMP + diphosphate</text>
        <dbReference type="Rhea" id="RHEA:14781"/>
        <dbReference type="ChEBI" id="CHEBI:30616"/>
        <dbReference type="ChEBI" id="CHEBI:33019"/>
        <dbReference type="ChEBI" id="CHEBI:36165"/>
        <dbReference type="ChEBI" id="CHEBI:57287"/>
        <dbReference type="ChEBI" id="CHEBI:57360"/>
        <dbReference type="ChEBI" id="CHEBI:456215"/>
        <dbReference type="EC" id="6.2.1.14"/>
    </reaction>
</comment>
<comment type="cofactor">
    <cofactor evidence="1">
        <name>Mg(2+)</name>
        <dbReference type="ChEBI" id="CHEBI:18420"/>
    </cofactor>
</comment>
<comment type="pathway">
    <text evidence="1">Metabolic intermediate metabolism; pimeloyl-CoA biosynthesis; pimeloyl-CoA from pimelate: step 1/1.</text>
</comment>
<comment type="subunit">
    <text evidence="1">Homodimer.</text>
</comment>
<comment type="similarity">
    <text evidence="1">Belongs to the BioW family.</text>
</comment>
<reference key="1">
    <citation type="journal article" date="2004" name="J. Bacteriol.">
        <title>Structural and functional characterization of gene clusters directing nonribosomal synthesis of bioactive cyclic lipopeptides in Bacillus amyloliquefaciens strain FZB42.</title>
        <authorList>
            <person name="Koumoutsi A."/>
            <person name="Chen X.H."/>
            <person name="Henne A."/>
            <person name="Liesegang H."/>
            <person name="Hitzeroth G."/>
            <person name="Franke P."/>
            <person name="Vater J."/>
            <person name="Borriss R."/>
        </authorList>
    </citation>
    <scope>NUCLEOTIDE SEQUENCE [GENOMIC DNA]</scope>
    <source>
        <strain>FZB42</strain>
    </source>
</reference>
<name>BIOW_BACAM</name>
<sequence>MTYSEKALIFCISVNLKFILVHINFQSKRKEGNICGKKPTYSVRMRASRNAPHEQGGKHISGGERLITYSGLQEAVDGLLHKGFSHSRGIPDFMQIQLESINEPIETIRPLPVAFHQSDTPEKGQAIARKLLQKAGIPPHMIEKAYENIAEYAEARGAVLFDIRAGERIDGRGNRGVRVSRMDWPSHDFQKWAFTHNMPENSRIKEAHAIAAKVCAHPGIIAELCWSDDPDYITGYVAAKKLGYQRIAKMKNAGDESGCRIFFTDGSIDTESCIHFLEKQPVFIQREENI</sequence>
<keyword id="KW-0067">ATP-binding</keyword>
<keyword id="KW-0093">Biotin biosynthesis</keyword>
<keyword id="KW-0436">Ligase</keyword>
<keyword id="KW-0460">Magnesium</keyword>
<keyword id="KW-0547">Nucleotide-binding</keyword>
<accession>Q70JY7</accession>
<gene>
    <name evidence="1" type="primary">bioW</name>
</gene>
<dbReference type="EC" id="6.2.1.14" evidence="1"/>
<dbReference type="EMBL" id="AJ576102">
    <property type="protein sequence ID" value="CAE11261.1"/>
    <property type="molecule type" value="Genomic_DNA"/>
</dbReference>
<dbReference type="SMR" id="Q70JY7"/>
<dbReference type="STRING" id="692420.BAMF_1924"/>
<dbReference type="eggNOG" id="COG1424">
    <property type="taxonomic scope" value="Bacteria"/>
</dbReference>
<dbReference type="UniPathway" id="UPA00999">
    <property type="reaction ID" value="UER00351"/>
</dbReference>
<dbReference type="GO" id="GO:0042410">
    <property type="term" value="F:6-carboxyhexanoate-CoA ligase activity"/>
    <property type="evidence" value="ECO:0007669"/>
    <property type="project" value="UniProtKB-UniRule"/>
</dbReference>
<dbReference type="GO" id="GO:0005524">
    <property type="term" value="F:ATP binding"/>
    <property type="evidence" value="ECO:0007669"/>
    <property type="project" value="UniProtKB-KW"/>
</dbReference>
<dbReference type="GO" id="GO:0000287">
    <property type="term" value="F:magnesium ion binding"/>
    <property type="evidence" value="ECO:0007669"/>
    <property type="project" value="UniProtKB-UniRule"/>
</dbReference>
<dbReference type="GO" id="GO:0009102">
    <property type="term" value="P:biotin biosynthetic process"/>
    <property type="evidence" value="ECO:0007669"/>
    <property type="project" value="UniProtKB-UniRule"/>
</dbReference>
<dbReference type="HAMAP" id="MF_00668">
    <property type="entry name" value="BioW"/>
    <property type="match status" value="1"/>
</dbReference>
<dbReference type="InterPro" id="IPR005499">
    <property type="entry name" value="BioW"/>
</dbReference>
<dbReference type="NCBIfam" id="TIGR01204">
    <property type="entry name" value="bioW"/>
    <property type="match status" value="1"/>
</dbReference>
<dbReference type="NCBIfam" id="NF002360">
    <property type="entry name" value="PRK01322.1"/>
    <property type="match status" value="1"/>
</dbReference>
<dbReference type="Pfam" id="PF03744">
    <property type="entry name" value="BioW"/>
    <property type="match status" value="1"/>
</dbReference>
<feature type="chain" id="PRO_0000412074" description="6-carboxyhexanoate--CoA ligase">
    <location>
        <begin position="1"/>
        <end position="290"/>
    </location>
</feature>
<organism>
    <name type="scientific">Bacillus amyloliquefaciens</name>
    <name type="common">Bacillus velezensis</name>
    <dbReference type="NCBI Taxonomy" id="1390"/>
    <lineage>
        <taxon>Bacteria</taxon>
        <taxon>Bacillati</taxon>
        <taxon>Bacillota</taxon>
        <taxon>Bacilli</taxon>
        <taxon>Bacillales</taxon>
        <taxon>Bacillaceae</taxon>
        <taxon>Bacillus</taxon>
        <taxon>Bacillus amyloliquefaciens group</taxon>
    </lineage>
</organism>